<reference key="1">
    <citation type="journal article" date="2009" name="Genome Res.">
        <title>Complete genome of the cellulolytic thermophile Acidothermus cellulolyticus 11B provides insights into its ecophysiological and evolutionary adaptations.</title>
        <authorList>
            <person name="Barabote R.D."/>
            <person name="Xie G."/>
            <person name="Leu D.H."/>
            <person name="Normand P."/>
            <person name="Necsulea A."/>
            <person name="Daubin V."/>
            <person name="Medigue C."/>
            <person name="Adney W.S."/>
            <person name="Xu X.C."/>
            <person name="Lapidus A."/>
            <person name="Parales R.E."/>
            <person name="Detter C."/>
            <person name="Pujic P."/>
            <person name="Bruce D."/>
            <person name="Lavire C."/>
            <person name="Challacombe J.F."/>
            <person name="Brettin T.S."/>
            <person name="Berry A.M."/>
        </authorList>
    </citation>
    <scope>NUCLEOTIDE SEQUENCE [LARGE SCALE GENOMIC DNA]</scope>
    <source>
        <strain>ATCC 43068 / DSM 8971 / 11B</strain>
    </source>
</reference>
<protein>
    <recommendedName>
        <fullName evidence="1">LexA repressor</fullName>
        <ecNumber evidence="1">3.4.21.88</ecNumber>
    </recommendedName>
</protein>
<name>LEXA_ACIC1</name>
<sequence length="275" mass="29575">MKRSTPRPARSQAALTTSSEESPDRVERGGDGVATVTDFPDGPPDETGLTPRQRRILDVIRDSVRRRGYPPSMREIGEAVGLTSTSSVAHQLMVLQRKGFLRRDPNRPRAVEIRSAESAVPDASAGHSPAADRAPSARRPPRGPSPIDSNPDVVAVPLVGRIAAGGPALAEQLIEDVVPLPRQLVGEGTLFLLQVKGDSMVDAAICDGDWVVVRQQPVAENGDIVAAMIDGEATVKTFKRRGAHIWLMPHNPQYEPIPGDEATILGRVVAVLRRL</sequence>
<accession>A0LUZ1</accession>
<gene>
    <name evidence="1" type="primary">lexA</name>
    <name type="ordered locus">Acel_1479</name>
</gene>
<proteinExistence type="inferred from homology"/>
<evidence type="ECO:0000255" key="1">
    <source>
        <dbReference type="HAMAP-Rule" id="MF_00015"/>
    </source>
</evidence>
<evidence type="ECO:0000256" key="2">
    <source>
        <dbReference type="SAM" id="MobiDB-lite"/>
    </source>
</evidence>
<feature type="chain" id="PRO_0000322709" description="LexA repressor">
    <location>
        <begin position="1"/>
        <end position="275"/>
    </location>
</feature>
<feature type="DNA-binding region" description="H-T-H motif" evidence="1">
    <location>
        <begin position="73"/>
        <end position="93"/>
    </location>
</feature>
<feature type="region of interest" description="Disordered" evidence="2">
    <location>
        <begin position="1"/>
        <end position="50"/>
    </location>
</feature>
<feature type="region of interest" description="Disordered" evidence="2">
    <location>
        <begin position="114"/>
        <end position="151"/>
    </location>
</feature>
<feature type="active site" description="For autocatalytic cleavage activity" evidence="1">
    <location>
        <position position="199"/>
    </location>
</feature>
<feature type="active site" description="For autocatalytic cleavage activity" evidence="1">
    <location>
        <position position="236"/>
    </location>
</feature>
<feature type="site" description="Cleavage; by autolysis" evidence="1">
    <location>
        <begin position="164"/>
        <end position="165"/>
    </location>
</feature>
<dbReference type="EC" id="3.4.21.88" evidence="1"/>
<dbReference type="EMBL" id="CP000481">
    <property type="protein sequence ID" value="ABK53251.1"/>
    <property type="molecule type" value="Genomic_DNA"/>
</dbReference>
<dbReference type="RefSeq" id="WP_011720314.1">
    <property type="nucleotide sequence ID" value="NC_008578.1"/>
</dbReference>
<dbReference type="SMR" id="A0LUZ1"/>
<dbReference type="FunCoup" id="A0LUZ1">
    <property type="interactions" value="8"/>
</dbReference>
<dbReference type="STRING" id="351607.Acel_1479"/>
<dbReference type="MEROPS" id="S24.001"/>
<dbReference type="KEGG" id="ace:Acel_1479"/>
<dbReference type="eggNOG" id="COG1974">
    <property type="taxonomic scope" value="Bacteria"/>
</dbReference>
<dbReference type="HOGENOM" id="CLU_066192_45_0_11"/>
<dbReference type="InParanoid" id="A0LUZ1"/>
<dbReference type="OrthoDB" id="9802364at2"/>
<dbReference type="Proteomes" id="UP000008221">
    <property type="component" value="Chromosome"/>
</dbReference>
<dbReference type="GO" id="GO:0003677">
    <property type="term" value="F:DNA binding"/>
    <property type="evidence" value="ECO:0007669"/>
    <property type="project" value="UniProtKB-UniRule"/>
</dbReference>
<dbReference type="GO" id="GO:0004252">
    <property type="term" value="F:serine-type endopeptidase activity"/>
    <property type="evidence" value="ECO:0007669"/>
    <property type="project" value="UniProtKB-UniRule"/>
</dbReference>
<dbReference type="GO" id="GO:0006281">
    <property type="term" value="P:DNA repair"/>
    <property type="evidence" value="ECO:0007669"/>
    <property type="project" value="UniProtKB-UniRule"/>
</dbReference>
<dbReference type="GO" id="GO:0006260">
    <property type="term" value="P:DNA replication"/>
    <property type="evidence" value="ECO:0007669"/>
    <property type="project" value="UniProtKB-UniRule"/>
</dbReference>
<dbReference type="GO" id="GO:0045892">
    <property type="term" value="P:negative regulation of DNA-templated transcription"/>
    <property type="evidence" value="ECO:0007669"/>
    <property type="project" value="UniProtKB-UniRule"/>
</dbReference>
<dbReference type="GO" id="GO:0006508">
    <property type="term" value="P:proteolysis"/>
    <property type="evidence" value="ECO:0007669"/>
    <property type="project" value="InterPro"/>
</dbReference>
<dbReference type="GO" id="GO:0009432">
    <property type="term" value="P:SOS response"/>
    <property type="evidence" value="ECO:0007669"/>
    <property type="project" value="UniProtKB-UniRule"/>
</dbReference>
<dbReference type="CDD" id="cd06529">
    <property type="entry name" value="S24_LexA-like"/>
    <property type="match status" value="1"/>
</dbReference>
<dbReference type="FunFam" id="1.10.10.10:FF:000009">
    <property type="entry name" value="LexA repressor"/>
    <property type="match status" value="1"/>
</dbReference>
<dbReference type="FunFam" id="2.10.109.10:FF:000001">
    <property type="entry name" value="LexA repressor"/>
    <property type="match status" value="1"/>
</dbReference>
<dbReference type="Gene3D" id="2.10.109.10">
    <property type="entry name" value="Umud Fragment, subunit A"/>
    <property type="match status" value="1"/>
</dbReference>
<dbReference type="Gene3D" id="1.10.10.10">
    <property type="entry name" value="Winged helix-like DNA-binding domain superfamily/Winged helix DNA-binding domain"/>
    <property type="match status" value="1"/>
</dbReference>
<dbReference type="HAMAP" id="MF_00015">
    <property type="entry name" value="LexA"/>
    <property type="match status" value="1"/>
</dbReference>
<dbReference type="InterPro" id="IPR006200">
    <property type="entry name" value="LexA"/>
</dbReference>
<dbReference type="InterPro" id="IPR039418">
    <property type="entry name" value="LexA-like"/>
</dbReference>
<dbReference type="InterPro" id="IPR036286">
    <property type="entry name" value="LexA/Signal_pep-like_sf"/>
</dbReference>
<dbReference type="InterPro" id="IPR006199">
    <property type="entry name" value="LexA_DNA-bd_dom"/>
</dbReference>
<dbReference type="InterPro" id="IPR050077">
    <property type="entry name" value="LexA_repressor"/>
</dbReference>
<dbReference type="InterPro" id="IPR006197">
    <property type="entry name" value="Peptidase_S24_LexA"/>
</dbReference>
<dbReference type="InterPro" id="IPR015927">
    <property type="entry name" value="Peptidase_S24_S26A/B/C"/>
</dbReference>
<dbReference type="InterPro" id="IPR036388">
    <property type="entry name" value="WH-like_DNA-bd_sf"/>
</dbReference>
<dbReference type="InterPro" id="IPR036390">
    <property type="entry name" value="WH_DNA-bd_sf"/>
</dbReference>
<dbReference type="NCBIfam" id="TIGR00498">
    <property type="entry name" value="lexA"/>
    <property type="match status" value="1"/>
</dbReference>
<dbReference type="PANTHER" id="PTHR33516">
    <property type="entry name" value="LEXA REPRESSOR"/>
    <property type="match status" value="1"/>
</dbReference>
<dbReference type="PANTHER" id="PTHR33516:SF2">
    <property type="entry name" value="LEXA REPRESSOR-RELATED"/>
    <property type="match status" value="1"/>
</dbReference>
<dbReference type="Pfam" id="PF01726">
    <property type="entry name" value="LexA_DNA_bind"/>
    <property type="match status" value="1"/>
</dbReference>
<dbReference type="Pfam" id="PF00717">
    <property type="entry name" value="Peptidase_S24"/>
    <property type="match status" value="1"/>
</dbReference>
<dbReference type="PRINTS" id="PR00726">
    <property type="entry name" value="LEXASERPTASE"/>
</dbReference>
<dbReference type="SUPFAM" id="SSF51306">
    <property type="entry name" value="LexA/Signal peptidase"/>
    <property type="match status" value="1"/>
</dbReference>
<dbReference type="SUPFAM" id="SSF46785">
    <property type="entry name" value="Winged helix' DNA-binding domain"/>
    <property type="match status" value="1"/>
</dbReference>
<keyword id="KW-0068">Autocatalytic cleavage</keyword>
<keyword id="KW-0227">DNA damage</keyword>
<keyword id="KW-0234">DNA repair</keyword>
<keyword id="KW-0235">DNA replication</keyword>
<keyword id="KW-0238">DNA-binding</keyword>
<keyword id="KW-0378">Hydrolase</keyword>
<keyword id="KW-1185">Reference proteome</keyword>
<keyword id="KW-0678">Repressor</keyword>
<keyword id="KW-0742">SOS response</keyword>
<keyword id="KW-0804">Transcription</keyword>
<keyword id="KW-0805">Transcription regulation</keyword>
<organism>
    <name type="scientific">Acidothermus cellulolyticus (strain ATCC 43068 / DSM 8971 / 11B)</name>
    <dbReference type="NCBI Taxonomy" id="351607"/>
    <lineage>
        <taxon>Bacteria</taxon>
        <taxon>Bacillati</taxon>
        <taxon>Actinomycetota</taxon>
        <taxon>Actinomycetes</taxon>
        <taxon>Acidothermales</taxon>
        <taxon>Acidothermaceae</taxon>
        <taxon>Acidothermus</taxon>
    </lineage>
</organism>
<comment type="function">
    <text evidence="1">Represses a number of genes involved in the response to DNA damage (SOS response), including recA and lexA. In the presence of single-stranded DNA, RecA interacts with LexA causing an autocatalytic cleavage which disrupts the DNA-binding part of LexA, leading to derepression of the SOS regulon and eventually DNA repair.</text>
</comment>
<comment type="catalytic activity">
    <reaction evidence="1">
        <text>Hydrolysis of Ala-|-Gly bond in repressor LexA.</text>
        <dbReference type="EC" id="3.4.21.88"/>
    </reaction>
</comment>
<comment type="subunit">
    <text evidence="1">Homodimer.</text>
</comment>
<comment type="similarity">
    <text evidence="1">Belongs to the peptidase S24 family.</text>
</comment>